<protein>
    <recommendedName>
        <fullName evidence="1">DNA ligase</fullName>
        <ecNumber evidence="1">6.5.1.2</ecNumber>
    </recommendedName>
    <alternativeName>
        <fullName evidence="1">Polydeoxyribonucleotide synthase [NAD(+)]</fullName>
    </alternativeName>
</protein>
<reference key="1">
    <citation type="journal article" date="2007" name="J. Bacteriol.">
        <title>Genome of the opportunistic pathogen Streptococcus sanguinis.</title>
        <authorList>
            <person name="Xu P."/>
            <person name="Alves J.M."/>
            <person name="Kitten T."/>
            <person name="Brown A."/>
            <person name="Chen Z."/>
            <person name="Ozaki L.S."/>
            <person name="Manque P."/>
            <person name="Ge X."/>
            <person name="Serrano M.G."/>
            <person name="Puiu D."/>
            <person name="Hendricks S."/>
            <person name="Wang Y."/>
            <person name="Chaplin M.D."/>
            <person name="Akan D."/>
            <person name="Paik S."/>
            <person name="Peterson D.L."/>
            <person name="Macrina F.L."/>
            <person name="Buck G.A."/>
        </authorList>
    </citation>
    <scope>NUCLEOTIDE SEQUENCE [LARGE SCALE GENOMIC DNA]</scope>
    <source>
        <strain>SK36</strain>
    </source>
</reference>
<accession>A3CNX3</accession>
<gene>
    <name evidence="1" type="primary">ligA</name>
    <name type="ordered locus">SSA_1484</name>
</gene>
<keyword id="KW-0227">DNA damage</keyword>
<keyword id="KW-0234">DNA repair</keyword>
<keyword id="KW-0235">DNA replication</keyword>
<keyword id="KW-0436">Ligase</keyword>
<keyword id="KW-0460">Magnesium</keyword>
<keyword id="KW-0464">Manganese</keyword>
<keyword id="KW-0479">Metal-binding</keyword>
<keyword id="KW-0520">NAD</keyword>
<keyword id="KW-1185">Reference proteome</keyword>
<keyword id="KW-0862">Zinc</keyword>
<feature type="chain" id="PRO_0000313467" description="DNA ligase">
    <location>
        <begin position="1"/>
        <end position="652"/>
    </location>
</feature>
<feature type="domain" description="BRCT" evidence="1">
    <location>
        <begin position="577"/>
        <end position="652"/>
    </location>
</feature>
<feature type="active site" description="N6-AMP-lysine intermediate" evidence="1">
    <location>
        <position position="109"/>
    </location>
</feature>
<feature type="binding site" evidence="1">
    <location>
        <begin position="29"/>
        <end position="33"/>
    </location>
    <ligand>
        <name>NAD(+)</name>
        <dbReference type="ChEBI" id="CHEBI:57540"/>
    </ligand>
</feature>
<feature type="binding site" evidence="1">
    <location>
        <begin position="78"/>
        <end position="79"/>
    </location>
    <ligand>
        <name>NAD(+)</name>
        <dbReference type="ChEBI" id="CHEBI:57540"/>
    </ligand>
</feature>
<feature type="binding site" evidence="1">
    <location>
        <position position="107"/>
    </location>
    <ligand>
        <name>NAD(+)</name>
        <dbReference type="ChEBI" id="CHEBI:57540"/>
    </ligand>
</feature>
<feature type="binding site" evidence="1">
    <location>
        <position position="130"/>
    </location>
    <ligand>
        <name>NAD(+)</name>
        <dbReference type="ChEBI" id="CHEBI:57540"/>
    </ligand>
</feature>
<feature type="binding site" evidence="1">
    <location>
        <position position="164"/>
    </location>
    <ligand>
        <name>NAD(+)</name>
        <dbReference type="ChEBI" id="CHEBI:57540"/>
    </ligand>
</feature>
<feature type="binding site" evidence="1">
    <location>
        <position position="278"/>
    </location>
    <ligand>
        <name>NAD(+)</name>
        <dbReference type="ChEBI" id="CHEBI:57540"/>
    </ligand>
</feature>
<feature type="binding site" evidence="1">
    <location>
        <position position="302"/>
    </location>
    <ligand>
        <name>NAD(+)</name>
        <dbReference type="ChEBI" id="CHEBI:57540"/>
    </ligand>
</feature>
<feature type="binding site" evidence="1">
    <location>
        <position position="395"/>
    </location>
    <ligand>
        <name>Zn(2+)</name>
        <dbReference type="ChEBI" id="CHEBI:29105"/>
    </ligand>
</feature>
<feature type="binding site" evidence="1">
    <location>
        <position position="398"/>
    </location>
    <ligand>
        <name>Zn(2+)</name>
        <dbReference type="ChEBI" id="CHEBI:29105"/>
    </ligand>
</feature>
<feature type="binding site" evidence="1">
    <location>
        <position position="413"/>
    </location>
    <ligand>
        <name>Zn(2+)</name>
        <dbReference type="ChEBI" id="CHEBI:29105"/>
    </ligand>
</feature>
<feature type="binding site" evidence="1">
    <location>
        <position position="418"/>
    </location>
    <ligand>
        <name>Zn(2+)</name>
        <dbReference type="ChEBI" id="CHEBI:29105"/>
    </ligand>
</feature>
<organism>
    <name type="scientific">Streptococcus sanguinis (strain SK36)</name>
    <dbReference type="NCBI Taxonomy" id="388919"/>
    <lineage>
        <taxon>Bacteria</taxon>
        <taxon>Bacillati</taxon>
        <taxon>Bacillota</taxon>
        <taxon>Bacilli</taxon>
        <taxon>Lactobacillales</taxon>
        <taxon>Streptococcaceae</taxon>
        <taxon>Streptococcus</taxon>
    </lineage>
</organism>
<proteinExistence type="inferred from homology"/>
<sequence>MKERMSELVELLNRYAHEYYTADRPSVSDSEYDRLYRELAELEEKYPTDILPDSPTHRVGGKILEGFEKYPHQYPLFSLQDAFSREELLAFDQRVRKEFPQVSYLCELKIDGLSISLTYENGILVAGATRGDGSVGENITENLKRVKDIPLTLKEPLDITVRGECYMPKASFDAVNQLRQENGEPEFANPRNAAAGTLRQLDTAVVAKRNLATFLYQEASPTQVGSQEEVLNKLADLDFSVNPTHILADSIESVWEFIEKIAEERDSLPYEIDGIVIKVNDLAVQEELGFTVKAPKWAIAYKFPAEEKEAQLLSVDWTVGRTGVVTPTANLTPVQLAGTTVSRATLHNVDYIAEKDIRQKDTVIVYKAGDIIPAVLRVVESKRVSEEALEVPSHCPSCESELVHFEDEVALRCINPLCPAQIKEGLIHFASRDAMNITGLGPAVVEKLFAQNLVKDVAGIYRLTIENLLELENFKEKSANKLYTAIQASKKNSAERLLFGLGIRHVGSKASRILLEKFHDIPRLSQASQEEIAAIDSLGTVIAQSLHTYFEQEGSQILLAELQEAGVNLDYLGQKAAADAALSGMTVVLTGKLQKLTRNQAKEKLQSLGANVSGSVSKKTDLVVAGADAGSKLAKAQELGIEIRDEDWLDSL</sequence>
<dbReference type="EC" id="6.5.1.2" evidence="1"/>
<dbReference type="EMBL" id="CP000387">
    <property type="protein sequence ID" value="ABN44878.1"/>
    <property type="molecule type" value="Genomic_DNA"/>
</dbReference>
<dbReference type="RefSeq" id="WP_011837172.1">
    <property type="nucleotide sequence ID" value="NC_009009.1"/>
</dbReference>
<dbReference type="RefSeq" id="YP_001035428.1">
    <property type="nucleotide sequence ID" value="NC_009009.1"/>
</dbReference>
<dbReference type="SMR" id="A3CNX3"/>
<dbReference type="STRING" id="388919.SSA_1484"/>
<dbReference type="KEGG" id="ssa:SSA_1484"/>
<dbReference type="PATRIC" id="fig|388919.9.peg.1409"/>
<dbReference type="eggNOG" id="COG0272">
    <property type="taxonomic scope" value="Bacteria"/>
</dbReference>
<dbReference type="HOGENOM" id="CLU_007764_2_1_9"/>
<dbReference type="OrthoDB" id="9759736at2"/>
<dbReference type="Proteomes" id="UP000002148">
    <property type="component" value="Chromosome"/>
</dbReference>
<dbReference type="GO" id="GO:0005829">
    <property type="term" value="C:cytosol"/>
    <property type="evidence" value="ECO:0007669"/>
    <property type="project" value="TreeGrafter"/>
</dbReference>
<dbReference type="GO" id="GO:0003911">
    <property type="term" value="F:DNA ligase (NAD+) activity"/>
    <property type="evidence" value="ECO:0007669"/>
    <property type="project" value="UniProtKB-UniRule"/>
</dbReference>
<dbReference type="GO" id="GO:0046872">
    <property type="term" value="F:metal ion binding"/>
    <property type="evidence" value="ECO:0007669"/>
    <property type="project" value="UniProtKB-KW"/>
</dbReference>
<dbReference type="GO" id="GO:0006281">
    <property type="term" value="P:DNA repair"/>
    <property type="evidence" value="ECO:0007669"/>
    <property type="project" value="UniProtKB-KW"/>
</dbReference>
<dbReference type="GO" id="GO:0006260">
    <property type="term" value="P:DNA replication"/>
    <property type="evidence" value="ECO:0007669"/>
    <property type="project" value="UniProtKB-KW"/>
</dbReference>
<dbReference type="CDD" id="cd17748">
    <property type="entry name" value="BRCT_DNA_ligase_like"/>
    <property type="match status" value="1"/>
</dbReference>
<dbReference type="CDD" id="cd00114">
    <property type="entry name" value="LIGANc"/>
    <property type="match status" value="1"/>
</dbReference>
<dbReference type="FunFam" id="1.10.150.20:FF:000006">
    <property type="entry name" value="DNA ligase"/>
    <property type="match status" value="1"/>
</dbReference>
<dbReference type="FunFam" id="1.10.150.20:FF:000007">
    <property type="entry name" value="DNA ligase"/>
    <property type="match status" value="1"/>
</dbReference>
<dbReference type="FunFam" id="2.40.50.140:FF:000012">
    <property type="entry name" value="DNA ligase"/>
    <property type="match status" value="1"/>
</dbReference>
<dbReference type="FunFam" id="3.30.470.30:FF:000001">
    <property type="entry name" value="DNA ligase"/>
    <property type="match status" value="1"/>
</dbReference>
<dbReference type="Gene3D" id="6.20.10.30">
    <property type="match status" value="1"/>
</dbReference>
<dbReference type="Gene3D" id="1.10.150.20">
    <property type="entry name" value="5' to 3' exonuclease, C-terminal subdomain"/>
    <property type="match status" value="2"/>
</dbReference>
<dbReference type="Gene3D" id="3.40.50.10190">
    <property type="entry name" value="BRCT domain"/>
    <property type="match status" value="1"/>
</dbReference>
<dbReference type="Gene3D" id="3.30.470.30">
    <property type="entry name" value="DNA ligase/mRNA capping enzyme"/>
    <property type="match status" value="1"/>
</dbReference>
<dbReference type="Gene3D" id="1.10.287.610">
    <property type="entry name" value="Helix hairpin bin"/>
    <property type="match status" value="1"/>
</dbReference>
<dbReference type="Gene3D" id="2.40.50.140">
    <property type="entry name" value="Nucleic acid-binding proteins"/>
    <property type="match status" value="1"/>
</dbReference>
<dbReference type="HAMAP" id="MF_01588">
    <property type="entry name" value="DNA_ligase_A"/>
    <property type="match status" value="1"/>
</dbReference>
<dbReference type="InterPro" id="IPR001357">
    <property type="entry name" value="BRCT_dom"/>
</dbReference>
<dbReference type="InterPro" id="IPR036420">
    <property type="entry name" value="BRCT_dom_sf"/>
</dbReference>
<dbReference type="InterPro" id="IPR041663">
    <property type="entry name" value="DisA/LigA_HHH"/>
</dbReference>
<dbReference type="InterPro" id="IPR001679">
    <property type="entry name" value="DNA_ligase"/>
</dbReference>
<dbReference type="InterPro" id="IPR018239">
    <property type="entry name" value="DNA_ligase_AS"/>
</dbReference>
<dbReference type="InterPro" id="IPR033136">
    <property type="entry name" value="DNA_ligase_CS"/>
</dbReference>
<dbReference type="InterPro" id="IPR013839">
    <property type="entry name" value="DNAligase_adenylation"/>
</dbReference>
<dbReference type="InterPro" id="IPR013840">
    <property type="entry name" value="DNAligase_N"/>
</dbReference>
<dbReference type="InterPro" id="IPR012340">
    <property type="entry name" value="NA-bd_OB-fold"/>
</dbReference>
<dbReference type="InterPro" id="IPR004150">
    <property type="entry name" value="NAD_DNA_ligase_OB"/>
</dbReference>
<dbReference type="InterPro" id="IPR010994">
    <property type="entry name" value="RuvA_2-like"/>
</dbReference>
<dbReference type="InterPro" id="IPR004149">
    <property type="entry name" value="Znf_DNAligase_C4"/>
</dbReference>
<dbReference type="NCBIfam" id="TIGR00575">
    <property type="entry name" value="dnlj"/>
    <property type="match status" value="1"/>
</dbReference>
<dbReference type="NCBIfam" id="NF005932">
    <property type="entry name" value="PRK07956.1"/>
    <property type="match status" value="1"/>
</dbReference>
<dbReference type="PANTHER" id="PTHR23389">
    <property type="entry name" value="CHROMOSOME TRANSMISSION FIDELITY FACTOR 18"/>
    <property type="match status" value="1"/>
</dbReference>
<dbReference type="PANTHER" id="PTHR23389:SF9">
    <property type="entry name" value="DNA LIGASE"/>
    <property type="match status" value="1"/>
</dbReference>
<dbReference type="Pfam" id="PF00533">
    <property type="entry name" value="BRCT"/>
    <property type="match status" value="1"/>
</dbReference>
<dbReference type="Pfam" id="PF01653">
    <property type="entry name" value="DNA_ligase_aden"/>
    <property type="match status" value="1"/>
</dbReference>
<dbReference type="Pfam" id="PF03120">
    <property type="entry name" value="DNA_ligase_OB"/>
    <property type="match status" value="1"/>
</dbReference>
<dbReference type="Pfam" id="PF03119">
    <property type="entry name" value="DNA_ligase_ZBD"/>
    <property type="match status" value="1"/>
</dbReference>
<dbReference type="Pfam" id="PF12826">
    <property type="entry name" value="HHH_2"/>
    <property type="match status" value="1"/>
</dbReference>
<dbReference type="Pfam" id="PF14520">
    <property type="entry name" value="HHH_5"/>
    <property type="match status" value="1"/>
</dbReference>
<dbReference type="PIRSF" id="PIRSF001604">
    <property type="entry name" value="LigA"/>
    <property type="match status" value="1"/>
</dbReference>
<dbReference type="SMART" id="SM00292">
    <property type="entry name" value="BRCT"/>
    <property type="match status" value="1"/>
</dbReference>
<dbReference type="SMART" id="SM00532">
    <property type="entry name" value="LIGANc"/>
    <property type="match status" value="1"/>
</dbReference>
<dbReference type="SUPFAM" id="SSF52113">
    <property type="entry name" value="BRCT domain"/>
    <property type="match status" value="1"/>
</dbReference>
<dbReference type="SUPFAM" id="SSF56091">
    <property type="entry name" value="DNA ligase/mRNA capping enzyme, catalytic domain"/>
    <property type="match status" value="1"/>
</dbReference>
<dbReference type="SUPFAM" id="SSF50249">
    <property type="entry name" value="Nucleic acid-binding proteins"/>
    <property type="match status" value="1"/>
</dbReference>
<dbReference type="SUPFAM" id="SSF47781">
    <property type="entry name" value="RuvA domain 2-like"/>
    <property type="match status" value="1"/>
</dbReference>
<dbReference type="PROSITE" id="PS50172">
    <property type="entry name" value="BRCT"/>
    <property type="match status" value="1"/>
</dbReference>
<dbReference type="PROSITE" id="PS01055">
    <property type="entry name" value="DNA_LIGASE_N1"/>
    <property type="match status" value="1"/>
</dbReference>
<dbReference type="PROSITE" id="PS01056">
    <property type="entry name" value="DNA_LIGASE_N2"/>
    <property type="match status" value="1"/>
</dbReference>
<comment type="function">
    <text evidence="1">DNA ligase that catalyzes the formation of phosphodiester linkages between 5'-phosphoryl and 3'-hydroxyl groups in double-stranded DNA using NAD as a coenzyme and as the energy source for the reaction. It is essential for DNA replication and repair of damaged DNA.</text>
</comment>
<comment type="catalytic activity">
    <reaction evidence="1">
        <text>NAD(+) + (deoxyribonucleotide)n-3'-hydroxyl + 5'-phospho-(deoxyribonucleotide)m = (deoxyribonucleotide)n+m + AMP + beta-nicotinamide D-nucleotide.</text>
        <dbReference type="EC" id="6.5.1.2"/>
    </reaction>
</comment>
<comment type="cofactor">
    <cofactor evidence="1">
        <name>Mg(2+)</name>
        <dbReference type="ChEBI" id="CHEBI:18420"/>
    </cofactor>
    <cofactor evidence="1">
        <name>Mn(2+)</name>
        <dbReference type="ChEBI" id="CHEBI:29035"/>
    </cofactor>
</comment>
<comment type="similarity">
    <text evidence="1">Belongs to the NAD-dependent DNA ligase family. LigA subfamily.</text>
</comment>
<evidence type="ECO:0000255" key="1">
    <source>
        <dbReference type="HAMAP-Rule" id="MF_01588"/>
    </source>
</evidence>
<name>DNLJ_STRSV</name>